<reference key="1">
    <citation type="journal article" date="2009" name="Proc. Natl. Acad. Sci. U.S.A.">
        <title>Rapid sensitive analysis of cysteine rich peptide venom components.</title>
        <authorList>
            <person name="Ueberheide B.M."/>
            <person name="Fenyo D."/>
            <person name="Alewood P.F."/>
            <person name="Chait B.T."/>
        </authorList>
    </citation>
    <scope>PROTEIN SEQUENCE</scope>
    <scope>MASS SPECTROMETRY</scope>
    <scope>DISULFIDE BOND</scope>
    <scope>HYDROXYLATION AT PRO-7</scope>
    <scope>SUBCELLULAR LOCATION</scope>
    <source>
        <tissue>Venom</tissue>
    </source>
</reference>
<reference key="2">
    <citation type="journal article" date="2012" name="J. Proteome Res.">
        <title>Constrained de novo sequencing of conotoxins.</title>
        <authorList>
            <person name="Bhatia S."/>
            <person name="Kil Y.J."/>
            <person name="Ueberheide B."/>
            <person name="Chait B.T."/>
            <person name="Tayo L."/>
            <person name="Cruz L."/>
            <person name="Lu B."/>
            <person name="Yates J.R. III"/>
            <person name="Bern M."/>
        </authorList>
    </citation>
    <scope>IDENTIFICATION BY MASS SPECTROMETRY</scope>
    <scope>SUBCELLULAR LOCATION</scope>
    <source>
        <tissue>Venom</tissue>
    </source>
</reference>
<reference key="3">
    <citation type="journal article" date="2012" name="Toxicon">
        <title>Secretion and maturation of conotoxins in the venom ducts of Conus textile.</title>
        <authorList>
            <person name="Dobson R."/>
            <person name="Collodoro M."/>
            <person name="Gilles N."/>
            <person name="Turtoi A."/>
            <person name="De Pauw E."/>
            <person name="Quinton L."/>
        </authorList>
    </citation>
    <scope>IDENTIFICATION BY MASS SPECTROMETRY</scope>
    <scope>TISSUE SPECIFICITY</scope>
    <scope>POSITION IN VENOM DUCT</scope>
    <scope>HYDROXYLATION AT PRO-7</scope>
    <source>
        <tissue>Venom</tissue>
    </source>
</reference>
<name>CONO_CONTE</name>
<protein>
    <recommendedName>
        <fullName evidence="6">Conopressin-Tx</fullName>
    </recommendedName>
</protein>
<proteinExistence type="evidence at protein level"/>
<feature type="peptide" id="PRO_0000371263" description="Conopressin-Tx" evidence="3">
    <location>
        <begin position="1"/>
        <end position="8"/>
    </location>
</feature>
<feature type="modified residue" description="4-hydroxyproline" evidence="3 5">
    <location>
        <position position="7"/>
    </location>
</feature>
<feature type="disulfide bond" evidence="3">
    <location>
        <begin position="1"/>
        <end position="6"/>
    </location>
</feature>
<feature type="unsure residue" description="I or L" evidence="7">
    <location>
        <position position="3"/>
    </location>
</feature>
<comment type="function">
    <text evidence="1">Targets vasopressin-oxytocin related receptors.</text>
</comment>
<comment type="subcellular location">
    <subcellularLocation>
        <location evidence="3 4 5">Secreted</location>
    </subcellularLocation>
</comment>
<comment type="tissue specificity">
    <text evidence="7 8">Expressed by the venom duct. Is present in all duct parts with a highest content in the proximal part (part 1) (27%), part 2 (29%), and the distal part (part 5) (26%).</text>
</comment>
<comment type="domain">
    <text evidence="6">The cysteine framework is C-C.</text>
</comment>
<comment type="mass spectrometry" mass="962.411" error="0.02" method="Electrospray" evidence="3"/>
<comment type="similarity">
    <text evidence="2">Belongs to the vasopressin/oxytocin family.</text>
</comment>
<comment type="caution">
    <text evidence="3 4 5">According to a report, a hydroxyproline is present at position 8 (PubMed:22709442). According to other publications, a hydroxyproline is present at position 7 (PubMed:19380747, PubMed:23031820).</text>
</comment>
<accession>P86255</accession>
<sequence length="8" mass="949">CFIRNCPP</sequence>
<organism>
    <name type="scientific">Conus textile</name>
    <name type="common">Cloth-of-gold cone</name>
    <dbReference type="NCBI Taxonomy" id="6494"/>
    <lineage>
        <taxon>Eukaryota</taxon>
        <taxon>Metazoa</taxon>
        <taxon>Spiralia</taxon>
        <taxon>Lophotrochozoa</taxon>
        <taxon>Mollusca</taxon>
        <taxon>Gastropoda</taxon>
        <taxon>Caenogastropoda</taxon>
        <taxon>Neogastropoda</taxon>
        <taxon>Conoidea</taxon>
        <taxon>Conidae</taxon>
        <taxon>Conus</taxon>
        <taxon>Cylinder</taxon>
    </lineage>
</organism>
<dbReference type="ConoServer" id="3726">
    <property type="toxin name" value="conopressin-Tx"/>
</dbReference>
<dbReference type="GO" id="GO:0005576">
    <property type="term" value="C:extracellular region"/>
    <property type="evidence" value="ECO:0007669"/>
    <property type="project" value="UniProtKB-SubCell"/>
</dbReference>
<dbReference type="GO" id="GO:0090729">
    <property type="term" value="F:toxin activity"/>
    <property type="evidence" value="ECO:0007669"/>
    <property type="project" value="UniProtKB-KW"/>
</dbReference>
<keyword id="KW-0903">Direct protein sequencing</keyword>
<keyword id="KW-1015">Disulfide bond</keyword>
<keyword id="KW-1213">G-protein coupled receptor impairing toxin</keyword>
<keyword id="KW-0379">Hydroxylation</keyword>
<keyword id="KW-0964">Secreted</keyword>
<keyword id="KW-0800">Toxin</keyword>
<evidence type="ECO:0000250" key="1">
    <source>
        <dbReference type="UniProtKB" id="P0DL76"/>
    </source>
</evidence>
<evidence type="ECO:0000255" key="2"/>
<evidence type="ECO:0000269" key="3">
    <source>
    </source>
</evidence>
<evidence type="ECO:0000269" key="4">
    <source>
    </source>
</evidence>
<evidence type="ECO:0000269" key="5">
    <source>
    </source>
</evidence>
<evidence type="ECO:0000305" key="6"/>
<evidence type="ECO:0000305" key="7">
    <source>
    </source>
</evidence>
<evidence type="ECO:0000305" key="8">
    <source>
    </source>
</evidence>